<feature type="chain" id="PRO_0000264240" description="C-type lectin domain family 2 member A">
    <location>
        <begin position="1"/>
        <end position="174"/>
    </location>
</feature>
<feature type="topological domain" description="Cytoplasmic" evidence="1">
    <location>
        <begin position="1"/>
        <end position="27"/>
    </location>
</feature>
<feature type="transmembrane region" description="Helical; Signal-anchor for type II membrane protein" evidence="1">
    <location>
        <begin position="28"/>
        <end position="48"/>
    </location>
</feature>
<feature type="topological domain" description="Extracellular" evidence="1">
    <location>
        <begin position="49"/>
        <end position="174"/>
    </location>
</feature>
<feature type="domain" description="C-type lectin" evidence="2">
    <location>
        <begin position="65"/>
        <end position="174"/>
    </location>
</feature>
<feature type="glycosylation site" description="N-linked (GlcNAc...) asparagine" evidence="6 7">
    <location>
        <position position="78"/>
    </location>
</feature>
<feature type="glycosylation site" description="N-linked (GlcNAc...) asparagine" evidence="6 7">
    <location>
        <position position="130"/>
    </location>
</feature>
<feature type="glycosylation site" description="N-linked (GlcNAc...) asparagine" evidence="7">
    <location>
        <position position="143"/>
    </location>
</feature>
<feature type="disulfide bond" evidence="2 6">
    <location>
        <begin position="58"/>
        <end position="69"/>
    </location>
</feature>
<feature type="disulfide bond" evidence="2 6">
    <location>
        <begin position="86"/>
        <end position="167"/>
    </location>
</feature>
<feature type="splice variant" id="VSP_035643" description="In isoform 2." evidence="8 9">
    <original>FEIIGNGSFAFLSADGVHSSRGFIDIKWICSKPKYFL</original>
    <variation>PSNSKWSCNWSLRQWLLLLGPLR</variation>
    <location>
        <begin position="138"/>
        <end position="174"/>
    </location>
</feature>
<feature type="sequence variant" id="VAR_029629" description="In dbSNP:rs526680." evidence="3">
    <original>G</original>
    <variation>D</variation>
    <location>
        <position position="136"/>
    </location>
</feature>
<feature type="mutagenesis site" description="Partial loss of glycosylation." evidence="7">
    <original>N</original>
    <variation>A</variation>
    <location>
        <position position="78"/>
    </location>
</feature>
<feature type="mutagenesis site" description="Partial loss of glycosylation." evidence="7">
    <original>N</original>
    <variation>A</variation>
    <location>
        <position position="130"/>
    </location>
</feature>
<feature type="mutagenesis site" description="Partial loss of glycosylation." evidence="7">
    <original>N</original>
    <variation>A</variation>
    <location>
        <position position="143"/>
    </location>
</feature>
<feature type="mutagenesis site" description="Reduces affinity for KLRF2 40-fold." evidence="6">
    <original>F</original>
    <variation>A</variation>
    <location>
        <position position="148"/>
    </location>
</feature>
<feature type="mutagenesis site" description="No effect on affinity for KLRF2." evidence="6">
    <original>D</original>
    <variation>A</variation>
    <location>
        <position position="152"/>
    </location>
</feature>
<feature type="mutagenesis site" description="Slightly reduces affinity for KLRF2." evidence="6">
    <original>H</original>
    <variation>A</variation>
    <location>
        <position position="155"/>
    </location>
</feature>
<feature type="mutagenesis site" description="Reduces affinity for KLRF2 over 10'000-fold." evidence="6">
    <original>SR</original>
    <variation>AA</variation>
    <location>
        <begin position="157"/>
        <end position="158"/>
    </location>
</feature>
<feature type="mutagenesis site" description="Reduces affinity for KLRF2 550-fold.">
    <original>FI</original>
    <variation>AA</variation>
    <location>
        <begin position="160"/>
        <end position="161"/>
    </location>
</feature>
<feature type="mutagenesis site" description="Complete abrogation of KLRF2 binding." evidence="7">
    <original>I</original>
    <variation>K</variation>
    <location>
        <position position="161"/>
    </location>
</feature>
<feature type="mutagenesis site" description="Reduces affinity for KLRF2 360-fold." evidence="6">
    <original>D</original>
    <variation>A</variation>
    <location>
        <position position="162"/>
    </location>
</feature>
<feature type="strand" evidence="10">
    <location>
        <begin position="60"/>
        <end position="65"/>
    </location>
</feature>
<feature type="strand" evidence="10">
    <location>
        <begin position="68"/>
        <end position="72"/>
    </location>
</feature>
<feature type="helix" evidence="10">
    <location>
        <begin position="79"/>
        <end position="87"/>
    </location>
</feature>
<feature type="turn" evidence="10">
    <location>
        <begin position="88"/>
        <end position="90"/>
    </location>
</feature>
<feature type="helix" evidence="10">
    <location>
        <begin position="99"/>
        <end position="107"/>
    </location>
</feature>
<feature type="turn" evidence="10">
    <location>
        <begin position="108"/>
        <end position="111"/>
    </location>
</feature>
<feature type="strand" evidence="10">
    <location>
        <begin position="114"/>
        <end position="121"/>
    </location>
</feature>
<feature type="strand" evidence="10">
    <location>
        <begin position="129"/>
        <end position="131"/>
    </location>
</feature>
<feature type="strand" evidence="10">
    <location>
        <begin position="143"/>
        <end position="149"/>
    </location>
</feature>
<feature type="strand" evidence="10">
    <location>
        <begin position="154"/>
        <end position="157"/>
    </location>
</feature>
<feature type="strand" evidence="10">
    <location>
        <begin position="163"/>
        <end position="170"/>
    </location>
</feature>
<protein>
    <recommendedName>
        <fullName>C-type lectin domain family 2 member A</fullName>
    </recommendedName>
    <alternativeName>
        <fullName>Keratinocyte-associated C-type lectin</fullName>
        <shortName>KACL</shortName>
    </alternativeName>
    <alternativeName>
        <fullName>Proliferation-induced lymphocyte-associated receptor</fullName>
        <shortName>PILAR</shortName>
    </alternativeName>
</protein>
<keyword id="KW-0002">3D-structure</keyword>
<keyword id="KW-0025">Alternative splicing</keyword>
<keyword id="KW-1003">Cell membrane</keyword>
<keyword id="KW-1015">Disulfide bond</keyword>
<keyword id="KW-0325">Glycoprotein</keyword>
<keyword id="KW-0430">Lectin</keyword>
<keyword id="KW-0472">Membrane</keyword>
<keyword id="KW-1267">Proteomics identification</keyword>
<keyword id="KW-0675">Receptor</keyword>
<keyword id="KW-1185">Reference proteome</keyword>
<keyword id="KW-0735">Signal-anchor</keyword>
<keyword id="KW-0812">Transmembrane</keyword>
<keyword id="KW-1133">Transmembrane helix</keyword>
<organism>
    <name type="scientific">Homo sapiens</name>
    <name type="common">Human</name>
    <dbReference type="NCBI Taxonomy" id="9606"/>
    <lineage>
        <taxon>Eukaryota</taxon>
        <taxon>Metazoa</taxon>
        <taxon>Chordata</taxon>
        <taxon>Craniata</taxon>
        <taxon>Vertebrata</taxon>
        <taxon>Euteleostomi</taxon>
        <taxon>Mammalia</taxon>
        <taxon>Eutheria</taxon>
        <taxon>Euarchontoglires</taxon>
        <taxon>Primates</taxon>
        <taxon>Haplorrhini</taxon>
        <taxon>Catarrhini</taxon>
        <taxon>Hominidae</taxon>
        <taxon>Homo</taxon>
    </lineage>
</organism>
<name>CLC2A_HUMAN</name>
<reference key="1">
    <citation type="journal article" date="2008" name="Blood">
        <title>PILAR is a novel modulator of human T-cell expansion.</title>
        <authorList>
            <person name="Huarte E."/>
            <person name="Cubillos-Ruiz J.R."/>
            <person name="Nesbeth Y.C."/>
            <person name="Scarlett U.K."/>
            <person name="Martinez D.G."/>
            <person name="Engle X.A."/>
            <person name="Rigby W.F."/>
            <person name="Pioli P.A."/>
            <person name="Guyre P.M."/>
            <person name="Conejo-Garcia J.R."/>
        </authorList>
    </citation>
    <scope>NUCLEOTIDE SEQUENCE [MRNA] (ISOFORM 1)</scope>
    <scope>FUNCTION</scope>
    <scope>INTERACTION WITH KLRB1</scope>
    <scope>SUBCELLULAR LOCATION</scope>
    <scope>TISSUE SPECIFICITY</scope>
    <source>
        <tissue>Spleen</tissue>
    </source>
</reference>
<reference key="2">
    <citation type="journal article" date="2003" name="Genome Res.">
        <title>The secreted protein discovery initiative (SPDI), a large-scale effort to identify novel human secreted and transmembrane proteins: a bioinformatics assessment.</title>
        <authorList>
            <person name="Clark H.F."/>
            <person name="Gurney A.L."/>
            <person name="Abaya E."/>
            <person name="Baker K."/>
            <person name="Baldwin D.T."/>
            <person name="Brush J."/>
            <person name="Chen J."/>
            <person name="Chow B."/>
            <person name="Chui C."/>
            <person name="Crowley C."/>
            <person name="Currell B."/>
            <person name="Deuel B."/>
            <person name="Dowd P."/>
            <person name="Eaton D."/>
            <person name="Foster J.S."/>
            <person name="Grimaldi C."/>
            <person name="Gu Q."/>
            <person name="Hass P.E."/>
            <person name="Heldens S."/>
            <person name="Huang A."/>
            <person name="Kim H.S."/>
            <person name="Klimowski L."/>
            <person name="Jin Y."/>
            <person name="Johnson S."/>
            <person name="Lee J."/>
            <person name="Lewis L."/>
            <person name="Liao D."/>
            <person name="Mark M.R."/>
            <person name="Robbie E."/>
            <person name="Sanchez C."/>
            <person name="Schoenfeld J."/>
            <person name="Seshagiri S."/>
            <person name="Simmons L."/>
            <person name="Singh J."/>
            <person name="Smith V."/>
            <person name="Stinson J."/>
            <person name="Vagts A."/>
            <person name="Vandlen R.L."/>
            <person name="Watanabe C."/>
            <person name="Wieand D."/>
            <person name="Woods K."/>
            <person name="Xie M.-H."/>
            <person name="Yansura D.G."/>
            <person name="Yi S."/>
            <person name="Yu G."/>
            <person name="Yuan J."/>
            <person name="Zhang M."/>
            <person name="Zhang Z."/>
            <person name="Goddard A.D."/>
            <person name="Wood W.I."/>
            <person name="Godowski P.J."/>
            <person name="Gray A.M."/>
        </authorList>
    </citation>
    <scope>NUCLEOTIDE SEQUENCE [LARGE SCALE MRNA] (ISOFORM 2)</scope>
</reference>
<reference key="3">
    <citation type="journal article" date="2007" name="Immunogenetics">
        <title>CLEC2A: a novel, alternatively spliced and skin-associated member of the NKC-encoded AICL-CD69-LLT1 family.</title>
        <authorList>
            <person name="Spreu J."/>
            <person name="Kienle E.C."/>
            <person name="Schrage B."/>
            <person name="Steinle A."/>
        </authorList>
    </citation>
    <scope>NUCLEOTIDE SEQUENCE [MRNA] OF 8-166 (ISOFORM 1)</scope>
    <scope>NUCLEOTIDE SEQUENCE [MRNA] OF 8-154 (ISOFORM 2)</scope>
    <scope>VARIANT ASP-136</scope>
    <scope>SUBCELLULAR LOCATION</scope>
    <scope>TISSUE SPECIFICITY</scope>
    <source>
        <tissue>Histiocytic lymphoma</tissue>
    </source>
</reference>
<reference key="4">
    <citation type="journal article" date="2010" name="Proc. Natl. Acad. Sci. U.S.A.">
        <title>Interaction of C-type lectin-like receptors NKp65 and KACL facilitates dedicated immune recognition of human keratinocytes.</title>
        <authorList>
            <person name="Spreu J."/>
            <person name="Kuttruff S."/>
            <person name="Stejfova V."/>
            <person name="Dennehy K.M."/>
            <person name="Schittek B."/>
            <person name="Steinle A."/>
        </authorList>
    </citation>
    <scope>FUNCTION</scope>
    <scope>SUBUNIT</scope>
    <scope>GLYCOSYLATION</scope>
    <scope>TISSUE SPECIFICITY</scope>
</reference>
<reference key="5">
    <citation type="journal article" date="2015" name="Proteomics">
        <title>N-terminome analysis of the human mitochondrial proteome.</title>
        <authorList>
            <person name="Vaca Jacome A.S."/>
            <person name="Rabilloud T."/>
            <person name="Schaeffer-Reiss C."/>
            <person name="Rompais M."/>
            <person name="Ayoub D."/>
            <person name="Lane L."/>
            <person name="Bairoch A."/>
            <person name="Van Dorsselaer A."/>
            <person name="Carapito C."/>
        </authorList>
    </citation>
    <scope>IDENTIFICATION BY MASS SPECTROMETRY [LARGE SCALE ANALYSIS]</scope>
</reference>
<reference key="6">
    <citation type="journal article" date="2015" name="Immunology">
        <title>Key residues at the membrane-distal surface of KACL, but not glycosylation, determine the functional interaction of the keratinocyte-specific C-type lectin-like receptor KACL with its high-affinity receptor NKp65.</title>
        <authorList>
            <person name="Bauer B."/>
            <person name="Spreu J."/>
            <person name="Rohe C."/>
            <person name="Vogler I."/>
            <person name="Steinle A."/>
        </authorList>
    </citation>
    <scope>FUNCTION</scope>
    <scope>INTERACTION WITH KLRF2</scope>
    <scope>MUTAGENESIS OF ASN-78; ASN-130; ASN-143 AND ILE-161</scope>
    <scope>GLYCOSYLATION AT ASN-78; ASN-130 AND ASN-143</scope>
</reference>
<reference key="7">
    <citation type="journal article" date="2013" name="Proc. Natl. Acad. Sci. U.S.A.">
        <title>Structure of NKp65 bound to its keratinocyte ligand reveals basis for genetically linked recognition in natural killer gene complex.</title>
        <authorList>
            <person name="Li Y."/>
            <person name="Wang Q."/>
            <person name="Chen S."/>
            <person name="Brown P.H."/>
            <person name="Mariuzza R.A."/>
        </authorList>
    </citation>
    <scope>X-RAY CRYSTALLOGRAPHY (3.2 ANGSTROMS) OF 46-174 IN COMPLEX WITH KLRF2</scope>
    <scope>SUBUNIT</scope>
    <scope>INTERACTION WITH KLRF2</scope>
    <scope>MUTAGENESIS OF PHE-148; ASP-152; HIS-155; 157-SER-ARG-158 AND ASP-162</scope>
    <scope>GLYCOSYLATION AT ASN-78 AND ASN-130</scope>
    <scope>DISULFIDE BOND</scope>
</reference>
<accession>Q6UVW9</accession>
<accession>A5Y4G5</accession>
<accession>A9QKS2</accession>
<accession>A9QKS3</accession>
<proteinExistence type="evidence at protein level"/>
<sequence length="174" mass="19972">MINPELRDGRADGFIHRIVPKLIQNWKIGLMCFLSIIITTVCIIMIATWSKHAKPVACSGDWLGVRDKCFYFSDDTRNWTASKIFCSLQKAELAQIDTQEDMEFLKRYAGTDMHWIGLSRKQGDSWKWTNGTTFNGWFEIIGNGSFAFLSADGVHSSRGFIDIKWICSKPKYFL</sequence>
<evidence type="ECO:0000255" key="1"/>
<evidence type="ECO:0000255" key="2">
    <source>
        <dbReference type="PROSITE-ProRule" id="PRU00040"/>
    </source>
</evidence>
<evidence type="ECO:0000269" key="3">
    <source>
    </source>
</evidence>
<evidence type="ECO:0000269" key="4">
    <source>
    </source>
</evidence>
<evidence type="ECO:0000269" key="5">
    <source>
    </source>
</evidence>
<evidence type="ECO:0000269" key="6">
    <source>
    </source>
</evidence>
<evidence type="ECO:0000269" key="7">
    <source>
    </source>
</evidence>
<evidence type="ECO:0000303" key="8">
    <source>
    </source>
</evidence>
<evidence type="ECO:0000303" key="9">
    <source>
    </source>
</evidence>
<evidence type="ECO:0007829" key="10">
    <source>
        <dbReference type="PDB" id="4IOP"/>
    </source>
</evidence>
<gene>
    <name type="primary">CLEC2A</name>
    <name type="synonym">KACL</name>
    <name type="ORF">UNQ5792/PRO19597</name>
</gene>
<dbReference type="EMBL" id="EF127467">
    <property type="protein sequence ID" value="ABO33172.1"/>
    <property type="molecule type" value="mRNA"/>
</dbReference>
<dbReference type="EMBL" id="AY359126">
    <property type="protein sequence ID" value="AAQ89483.1"/>
    <property type="molecule type" value="mRNA"/>
</dbReference>
<dbReference type="EMBL" id="EU095393">
    <property type="protein sequence ID" value="ABW79912.1"/>
    <property type="molecule type" value="mRNA"/>
</dbReference>
<dbReference type="EMBL" id="EU095394">
    <property type="protein sequence ID" value="ABW79913.1"/>
    <property type="molecule type" value="mRNA"/>
</dbReference>
<dbReference type="CCDS" id="CCDS44829.1">
    <molecule id="Q6UVW9-1"/>
</dbReference>
<dbReference type="CCDS" id="CCDS8606.1">
    <molecule id="Q6UVW9-2"/>
</dbReference>
<dbReference type="RefSeq" id="NP_001124183.1">
    <molecule id="Q6UVW9-1"/>
    <property type="nucleotide sequence ID" value="NM_001130711.2"/>
</dbReference>
<dbReference type="RefSeq" id="NP_997258.1">
    <molecule id="Q6UVW9-2"/>
    <property type="nucleotide sequence ID" value="NM_207375.3"/>
</dbReference>
<dbReference type="PDB" id="4IOP">
    <property type="method" value="X-ray"/>
    <property type="resolution" value="3.20 A"/>
    <property type="chains" value="A=46-174"/>
</dbReference>
<dbReference type="PDBsum" id="4IOP"/>
<dbReference type="SMR" id="Q6UVW9"/>
<dbReference type="BioGRID" id="132462">
    <property type="interactions" value="5"/>
</dbReference>
<dbReference type="DIP" id="DIP-58611N"/>
<dbReference type="FunCoup" id="Q6UVW9">
    <property type="interactions" value="68"/>
</dbReference>
<dbReference type="IntAct" id="Q6UVW9">
    <property type="interactions" value="6"/>
</dbReference>
<dbReference type="STRING" id="9606.ENSP00000396163"/>
<dbReference type="MEROPS" id="I63.002"/>
<dbReference type="UniLectin" id="Q6UVW9"/>
<dbReference type="GlyCosmos" id="Q6UVW9">
    <property type="glycosylation" value="3 sites, No reported glycans"/>
</dbReference>
<dbReference type="GlyGen" id="Q6UVW9">
    <property type="glycosylation" value="3 sites"/>
</dbReference>
<dbReference type="iPTMnet" id="Q6UVW9"/>
<dbReference type="BioMuta" id="CLEC2A"/>
<dbReference type="DMDM" id="212276429"/>
<dbReference type="MassIVE" id="Q6UVW9"/>
<dbReference type="PaxDb" id="9606-ENSP00000396163"/>
<dbReference type="PeptideAtlas" id="Q6UVW9"/>
<dbReference type="TopDownProteomics" id="Q6UVW9-1">
    <molecule id="Q6UVW9-1"/>
</dbReference>
<dbReference type="Antibodypedia" id="53022">
    <property type="antibodies" value="145 antibodies from 23 providers"/>
</dbReference>
<dbReference type="DNASU" id="387836"/>
<dbReference type="Ensembl" id="ENST00000339766.8">
    <molecule id="Q6UVW9-2"/>
    <property type="protein sequence ID" value="ENSP00000339732.4"/>
    <property type="gene ID" value="ENSG00000188393.9"/>
</dbReference>
<dbReference type="Ensembl" id="ENST00000455827.2">
    <molecule id="Q6UVW9-1"/>
    <property type="protein sequence ID" value="ENSP00000396163.1"/>
    <property type="gene ID" value="ENSG00000188393.9"/>
</dbReference>
<dbReference type="GeneID" id="387836"/>
<dbReference type="KEGG" id="hsa:387836"/>
<dbReference type="MANE-Select" id="ENST00000455827.2">
    <property type="protein sequence ID" value="ENSP00000396163.1"/>
    <property type="RefSeq nucleotide sequence ID" value="NM_001130711.2"/>
    <property type="RefSeq protein sequence ID" value="NP_001124183.1"/>
</dbReference>
<dbReference type="UCSC" id="uc009zhb.3">
    <molecule id="Q6UVW9-1"/>
    <property type="organism name" value="human"/>
</dbReference>
<dbReference type="AGR" id="HGNC:24191"/>
<dbReference type="CTD" id="387836"/>
<dbReference type="DisGeNET" id="387836"/>
<dbReference type="GeneCards" id="CLEC2A"/>
<dbReference type="HGNC" id="HGNC:24191">
    <property type="gene designation" value="CLEC2A"/>
</dbReference>
<dbReference type="HPA" id="ENSG00000188393">
    <property type="expression patterns" value="Tissue enriched (skin)"/>
</dbReference>
<dbReference type="MIM" id="612087">
    <property type="type" value="gene"/>
</dbReference>
<dbReference type="neXtProt" id="NX_Q6UVW9"/>
<dbReference type="OpenTargets" id="ENSG00000188393"/>
<dbReference type="PharmGKB" id="PA142672099"/>
<dbReference type="VEuPathDB" id="HostDB:ENSG00000188393"/>
<dbReference type="eggNOG" id="KOG4297">
    <property type="taxonomic scope" value="Eukaryota"/>
</dbReference>
<dbReference type="GeneTree" id="ENSGT00940000163789"/>
<dbReference type="HOGENOM" id="CLU_049894_8_4_1"/>
<dbReference type="InParanoid" id="Q6UVW9"/>
<dbReference type="OMA" id="FNDWFEI"/>
<dbReference type="OrthoDB" id="9906043at2759"/>
<dbReference type="PAN-GO" id="Q6UVW9">
    <property type="GO annotations" value="1 GO annotation based on evolutionary models"/>
</dbReference>
<dbReference type="PhylomeDB" id="Q6UVW9"/>
<dbReference type="TreeFam" id="TF351467"/>
<dbReference type="PathwayCommons" id="Q6UVW9"/>
<dbReference type="SignaLink" id="Q6UVW9"/>
<dbReference type="BioGRID-ORCS" id="387836">
    <property type="hits" value="6 hits in 1130 CRISPR screens"/>
</dbReference>
<dbReference type="EvolutionaryTrace" id="Q6UVW9"/>
<dbReference type="GenomeRNAi" id="387836"/>
<dbReference type="Pharos" id="Q6UVW9">
    <property type="development level" value="Tbio"/>
</dbReference>
<dbReference type="PRO" id="PR:Q6UVW9"/>
<dbReference type="Proteomes" id="UP000005640">
    <property type="component" value="Chromosome 12"/>
</dbReference>
<dbReference type="RNAct" id="Q6UVW9">
    <property type="molecule type" value="protein"/>
</dbReference>
<dbReference type="Bgee" id="ENSG00000188393">
    <property type="expression patterns" value="Expressed in skin of leg and 44 other cell types or tissues"/>
</dbReference>
<dbReference type="GO" id="GO:0009897">
    <property type="term" value="C:external side of plasma membrane"/>
    <property type="evidence" value="ECO:0000318"/>
    <property type="project" value="GO_Central"/>
</dbReference>
<dbReference type="GO" id="GO:0005886">
    <property type="term" value="C:plasma membrane"/>
    <property type="evidence" value="ECO:0000314"/>
    <property type="project" value="HPA"/>
</dbReference>
<dbReference type="GO" id="GO:0030246">
    <property type="term" value="F:carbohydrate binding"/>
    <property type="evidence" value="ECO:0007669"/>
    <property type="project" value="UniProtKB-KW"/>
</dbReference>
<dbReference type="GO" id="GO:0042802">
    <property type="term" value="F:identical protein binding"/>
    <property type="evidence" value="ECO:0000353"/>
    <property type="project" value="IntAct"/>
</dbReference>
<dbReference type="GO" id="GO:0042803">
    <property type="term" value="F:protein homodimerization activity"/>
    <property type="evidence" value="ECO:0000314"/>
    <property type="project" value="UniProtKB"/>
</dbReference>
<dbReference type="GO" id="GO:0042267">
    <property type="term" value="P:natural killer cell mediated cytotoxicity"/>
    <property type="evidence" value="ECO:0000304"/>
    <property type="project" value="UniProtKB"/>
</dbReference>
<dbReference type="CDD" id="cd03593">
    <property type="entry name" value="CLECT_NK_receptors_like"/>
    <property type="match status" value="1"/>
</dbReference>
<dbReference type="FunFam" id="3.10.100.10:FF:000062">
    <property type="entry name" value="C-type lectin domain family 2 member D"/>
    <property type="match status" value="1"/>
</dbReference>
<dbReference type="Gene3D" id="3.10.100.10">
    <property type="entry name" value="Mannose-Binding Protein A, subunit A"/>
    <property type="match status" value="1"/>
</dbReference>
<dbReference type="InterPro" id="IPR001304">
    <property type="entry name" value="C-type_lectin-like"/>
</dbReference>
<dbReference type="InterPro" id="IPR016186">
    <property type="entry name" value="C-type_lectin-like/link_sf"/>
</dbReference>
<dbReference type="InterPro" id="IPR050828">
    <property type="entry name" value="C-type_lectin/matrix_domain"/>
</dbReference>
<dbReference type="InterPro" id="IPR016187">
    <property type="entry name" value="CTDL_fold"/>
</dbReference>
<dbReference type="InterPro" id="IPR033992">
    <property type="entry name" value="NKR-like_CTLD"/>
</dbReference>
<dbReference type="PANTHER" id="PTHR45710:SF40">
    <property type="entry name" value="C-TYPE LECTIN DOMAIN FAMILY 2 MEMBER A"/>
    <property type="match status" value="1"/>
</dbReference>
<dbReference type="PANTHER" id="PTHR45710">
    <property type="entry name" value="C-TYPE LECTIN DOMAIN-CONTAINING PROTEIN 180"/>
    <property type="match status" value="1"/>
</dbReference>
<dbReference type="Pfam" id="PF00059">
    <property type="entry name" value="Lectin_C"/>
    <property type="match status" value="1"/>
</dbReference>
<dbReference type="SMART" id="SM00034">
    <property type="entry name" value="CLECT"/>
    <property type="match status" value="1"/>
</dbReference>
<dbReference type="SUPFAM" id="SSF56436">
    <property type="entry name" value="C-type lectin-like"/>
    <property type="match status" value="1"/>
</dbReference>
<dbReference type="PROSITE" id="PS50041">
    <property type="entry name" value="C_TYPE_LECTIN_2"/>
    <property type="match status" value="1"/>
</dbReference>
<comment type="function">
    <text evidence="4 5 7">Membrane-bound protein expressed mainly on keratinocytes which acts as a ligand to stimulate the activating receptor NKp65/KLRF2, expressed on the surface of natural killer (NK) cells (PubMed:25510854). Facilitates thereby dedicated immune recognition of keratinocytes leading to natural killer cell mediated cytotoxicity (PubMed:20194751). Also plays a role in modulating the extent of T-cell expansion (PubMed:18550855).</text>
</comment>
<comment type="subunit">
    <text evidence="4 5 6">Homodimer; non-disulfide-linked. Interacts with KLRB1. Interacts with KLRF2.</text>
</comment>
<comment type="interaction">
    <interactant intactId="EBI-15839595">
        <id>Q6UVW9</id>
    </interactant>
    <interactant intactId="EBI-15839595">
        <id>Q6UVW9</id>
        <label>CLEC2A</label>
    </interactant>
    <organismsDiffer>false</organismsDiffer>
    <experiments>4</experiments>
</comment>
<comment type="interaction">
    <interactant intactId="EBI-15839595">
        <id>Q6UVW9</id>
    </interactant>
    <interactant intactId="EBI-11749983">
        <id>Q9UHP7-3</id>
        <label>CLEC2D</label>
    </interactant>
    <organismsDiffer>false</organismsDiffer>
    <experiments>3</experiments>
</comment>
<comment type="interaction">
    <interactant intactId="EBI-15839595">
        <id>Q6UVW9</id>
    </interactant>
    <interactant intactId="EBI-2927498">
        <id>O60883</id>
        <label>GPR37L1</label>
    </interactant>
    <organismsDiffer>false</organismsDiffer>
    <experiments>3</experiments>
</comment>
<comment type="interaction">
    <interactant intactId="EBI-15839595">
        <id>Q6UVW9</id>
    </interactant>
    <interactant intactId="EBI-11721746">
        <id>Q8TED1</id>
        <label>GPX8</label>
    </interactant>
    <organismsDiffer>false</organismsDiffer>
    <experiments>3</experiments>
</comment>
<comment type="interaction">
    <interactant intactId="EBI-15839595">
        <id>Q6UVW9</id>
    </interactant>
    <interactant intactId="EBI-11427100">
        <id>P31937</id>
        <label>HIBADH</label>
    </interactant>
    <organismsDiffer>false</organismsDiffer>
    <experiments>3</experiments>
</comment>
<comment type="interaction">
    <interactant intactId="EBI-15839595">
        <id>Q6UVW9</id>
    </interactant>
    <interactant intactId="EBI-15839574">
        <id>D3W0D1</id>
        <label>KLRF2</label>
    </interactant>
    <organismsDiffer>false</organismsDiffer>
    <experiments>5</experiments>
</comment>
<comment type="interaction">
    <interactant intactId="EBI-15839595">
        <id>Q6UVW9</id>
    </interactant>
    <interactant intactId="EBI-19027521">
        <id>Q8N6K0</id>
        <label>TEX29</label>
    </interactant>
    <organismsDiffer>false</organismsDiffer>
    <experiments>3</experiments>
</comment>
<comment type="subcellular location">
    <subcellularLocation>
        <location evidence="3 4">Cell membrane</location>
        <topology evidence="3 4">Single-pass type II membrane protein</topology>
    </subcellularLocation>
</comment>
<comment type="alternative products">
    <event type="alternative splicing"/>
    <isoform>
        <id>Q6UVW9-1</id>
        <name>1</name>
        <name>CLEC2A1</name>
        <sequence type="displayed"/>
    </isoform>
    <isoform>
        <id>Q6UVW9-2</id>
        <name>2</name>
        <name>CLEC2A2</name>
        <sequence type="described" ref="VSP_035643"/>
    </isoform>
</comment>
<comment type="tissue specificity">
    <text evidence="3 4 5">Mainly expressed in skin. Also expressed in keratinocytes, spleen, thymus, small intestine, peripheral blood monocytes, bone marrow, ovary, testis and skin. High expression in CD8(+), B-lymphocytes and naive CD4(+) T-cells. Restricted mostly to proliferating lymphocytes. Not detected in myeloid leukocytes or natural killer (NK) cells.</text>
</comment>
<comment type="induction">
    <text>By phytohemagglutinin (PHA) in peripheral CD8(+) T cells.</text>
</comment>
<comment type="PTM">
    <text evidence="5 6">N-glycosylated.</text>
</comment>